<keyword id="KW-0963">Cytoplasm</keyword>
<keyword id="KW-0444">Lipid biosynthesis</keyword>
<keyword id="KW-0443">Lipid metabolism</keyword>
<keyword id="KW-0520">NAD</keyword>
<keyword id="KW-0521">NADP</keyword>
<keyword id="KW-0547">Nucleotide-binding</keyword>
<keyword id="KW-0560">Oxidoreductase</keyword>
<keyword id="KW-0594">Phospholipid biosynthesis</keyword>
<keyword id="KW-1208">Phospholipid metabolism</keyword>
<keyword id="KW-1185">Reference proteome</keyword>
<name>GPDA_LEGPH</name>
<dbReference type="EC" id="1.1.1.94" evidence="1"/>
<dbReference type="EMBL" id="AE017354">
    <property type="protein sequence ID" value="AAU28371.1"/>
    <property type="status" value="ALT_INIT"/>
    <property type="molecule type" value="Genomic_DNA"/>
</dbReference>
<dbReference type="RefSeq" id="WP_015444146.1">
    <property type="nucleotide sequence ID" value="NC_002942.5"/>
</dbReference>
<dbReference type="RefSeq" id="YP_096318.1">
    <property type="nucleotide sequence ID" value="NC_002942.5"/>
</dbReference>
<dbReference type="SMR" id="Q5ZT56"/>
<dbReference type="STRING" id="272624.lpg2309"/>
<dbReference type="PaxDb" id="272624-lpg2309"/>
<dbReference type="KEGG" id="lpn:lpg2309"/>
<dbReference type="PATRIC" id="fig|272624.6.peg.2423"/>
<dbReference type="eggNOG" id="COG0240">
    <property type="taxonomic scope" value="Bacteria"/>
</dbReference>
<dbReference type="HOGENOM" id="CLU_033449_0_2_6"/>
<dbReference type="OrthoDB" id="9812273at2"/>
<dbReference type="UniPathway" id="UPA00940"/>
<dbReference type="Proteomes" id="UP000000609">
    <property type="component" value="Chromosome"/>
</dbReference>
<dbReference type="GO" id="GO:0005829">
    <property type="term" value="C:cytosol"/>
    <property type="evidence" value="ECO:0007669"/>
    <property type="project" value="TreeGrafter"/>
</dbReference>
<dbReference type="GO" id="GO:0047952">
    <property type="term" value="F:glycerol-3-phosphate dehydrogenase [NAD(P)+] activity"/>
    <property type="evidence" value="ECO:0007669"/>
    <property type="project" value="UniProtKB-UniRule"/>
</dbReference>
<dbReference type="GO" id="GO:0051287">
    <property type="term" value="F:NAD binding"/>
    <property type="evidence" value="ECO:0007669"/>
    <property type="project" value="InterPro"/>
</dbReference>
<dbReference type="GO" id="GO:0005975">
    <property type="term" value="P:carbohydrate metabolic process"/>
    <property type="evidence" value="ECO:0007669"/>
    <property type="project" value="InterPro"/>
</dbReference>
<dbReference type="GO" id="GO:0046167">
    <property type="term" value="P:glycerol-3-phosphate biosynthetic process"/>
    <property type="evidence" value="ECO:0007669"/>
    <property type="project" value="UniProtKB-UniRule"/>
</dbReference>
<dbReference type="GO" id="GO:0046168">
    <property type="term" value="P:glycerol-3-phosphate catabolic process"/>
    <property type="evidence" value="ECO:0007669"/>
    <property type="project" value="InterPro"/>
</dbReference>
<dbReference type="GO" id="GO:0046474">
    <property type="term" value="P:glycerophospholipid biosynthetic process"/>
    <property type="evidence" value="ECO:0007669"/>
    <property type="project" value="TreeGrafter"/>
</dbReference>
<dbReference type="FunFam" id="1.10.1040.10:FF:000001">
    <property type="entry name" value="Glycerol-3-phosphate dehydrogenase [NAD(P)+]"/>
    <property type="match status" value="1"/>
</dbReference>
<dbReference type="FunFam" id="3.40.50.720:FF:000019">
    <property type="entry name" value="Glycerol-3-phosphate dehydrogenase [NAD(P)+]"/>
    <property type="match status" value="1"/>
</dbReference>
<dbReference type="Gene3D" id="1.10.1040.10">
    <property type="entry name" value="N-(1-d-carboxylethyl)-l-norvaline Dehydrogenase, domain 2"/>
    <property type="match status" value="1"/>
</dbReference>
<dbReference type="Gene3D" id="3.40.50.720">
    <property type="entry name" value="NAD(P)-binding Rossmann-like Domain"/>
    <property type="match status" value="1"/>
</dbReference>
<dbReference type="HAMAP" id="MF_00394">
    <property type="entry name" value="NAD_Glyc3P_dehydrog"/>
    <property type="match status" value="1"/>
</dbReference>
<dbReference type="InterPro" id="IPR008927">
    <property type="entry name" value="6-PGluconate_DH-like_C_sf"/>
</dbReference>
<dbReference type="InterPro" id="IPR013328">
    <property type="entry name" value="6PGD_dom2"/>
</dbReference>
<dbReference type="InterPro" id="IPR006168">
    <property type="entry name" value="G3P_DH_NAD-dep"/>
</dbReference>
<dbReference type="InterPro" id="IPR006109">
    <property type="entry name" value="G3P_DH_NAD-dep_C"/>
</dbReference>
<dbReference type="InterPro" id="IPR011128">
    <property type="entry name" value="G3P_DH_NAD-dep_N"/>
</dbReference>
<dbReference type="InterPro" id="IPR036291">
    <property type="entry name" value="NAD(P)-bd_dom_sf"/>
</dbReference>
<dbReference type="NCBIfam" id="NF000940">
    <property type="entry name" value="PRK00094.1-2"/>
    <property type="match status" value="1"/>
</dbReference>
<dbReference type="NCBIfam" id="NF000942">
    <property type="entry name" value="PRK00094.1-4"/>
    <property type="match status" value="1"/>
</dbReference>
<dbReference type="PANTHER" id="PTHR11728">
    <property type="entry name" value="GLYCEROL-3-PHOSPHATE DEHYDROGENASE"/>
    <property type="match status" value="1"/>
</dbReference>
<dbReference type="PANTHER" id="PTHR11728:SF1">
    <property type="entry name" value="GLYCEROL-3-PHOSPHATE DEHYDROGENASE [NAD(+)] 2, CHLOROPLASTIC"/>
    <property type="match status" value="1"/>
</dbReference>
<dbReference type="Pfam" id="PF07479">
    <property type="entry name" value="NAD_Gly3P_dh_C"/>
    <property type="match status" value="1"/>
</dbReference>
<dbReference type="Pfam" id="PF01210">
    <property type="entry name" value="NAD_Gly3P_dh_N"/>
    <property type="match status" value="1"/>
</dbReference>
<dbReference type="PIRSF" id="PIRSF000114">
    <property type="entry name" value="Glycerol-3-P_dh"/>
    <property type="match status" value="1"/>
</dbReference>
<dbReference type="PRINTS" id="PR00077">
    <property type="entry name" value="GPDHDRGNASE"/>
</dbReference>
<dbReference type="SUPFAM" id="SSF48179">
    <property type="entry name" value="6-phosphogluconate dehydrogenase C-terminal domain-like"/>
    <property type="match status" value="1"/>
</dbReference>
<dbReference type="SUPFAM" id="SSF51735">
    <property type="entry name" value="NAD(P)-binding Rossmann-fold domains"/>
    <property type="match status" value="1"/>
</dbReference>
<dbReference type="PROSITE" id="PS00957">
    <property type="entry name" value="NAD_G3PDH"/>
    <property type="match status" value="1"/>
</dbReference>
<reference key="1">
    <citation type="journal article" date="2004" name="Science">
        <title>The genomic sequence of the accidental pathogen Legionella pneumophila.</title>
        <authorList>
            <person name="Chien M."/>
            <person name="Morozova I."/>
            <person name="Shi S."/>
            <person name="Sheng H."/>
            <person name="Chen J."/>
            <person name="Gomez S.M."/>
            <person name="Asamani G."/>
            <person name="Hill K."/>
            <person name="Nuara J."/>
            <person name="Feder M."/>
            <person name="Rineer J."/>
            <person name="Greenberg J.J."/>
            <person name="Steshenko V."/>
            <person name="Park S.H."/>
            <person name="Zhao B."/>
            <person name="Teplitskaya E."/>
            <person name="Edwards J.R."/>
            <person name="Pampou S."/>
            <person name="Georghiou A."/>
            <person name="Chou I.-C."/>
            <person name="Iannuccilli W."/>
            <person name="Ulz M.E."/>
            <person name="Kim D.H."/>
            <person name="Geringer-Sameth A."/>
            <person name="Goldsberry C."/>
            <person name="Morozov P."/>
            <person name="Fischer S.G."/>
            <person name="Segal G."/>
            <person name="Qu X."/>
            <person name="Rzhetsky A."/>
            <person name="Zhang P."/>
            <person name="Cayanis E."/>
            <person name="De Jong P.J."/>
            <person name="Ju J."/>
            <person name="Kalachikov S."/>
            <person name="Shuman H.A."/>
            <person name="Russo J.J."/>
        </authorList>
    </citation>
    <scope>NUCLEOTIDE SEQUENCE [LARGE SCALE GENOMIC DNA]</scope>
    <source>
        <strain>Philadelphia 1 / ATCC 33152 / DSM 7513</strain>
    </source>
</reference>
<proteinExistence type="inferred from homology"/>
<protein>
    <recommendedName>
        <fullName evidence="1">Glycerol-3-phosphate dehydrogenase [NAD(P)+]</fullName>
        <ecNumber evidence="1">1.1.1.94</ecNumber>
    </recommendedName>
    <alternativeName>
        <fullName evidence="1">NAD(P)(+)-dependent glycerol-3-phosphate dehydrogenase</fullName>
    </alternativeName>
    <alternativeName>
        <fullName evidence="1">NAD(P)H-dependent dihydroxyacetone-phosphate reductase</fullName>
    </alternativeName>
</protein>
<gene>
    <name evidence="1" type="primary">gpsA</name>
    <name type="ordered locus">lpg2309</name>
</gene>
<evidence type="ECO:0000255" key="1">
    <source>
        <dbReference type="HAMAP-Rule" id="MF_00394"/>
    </source>
</evidence>
<evidence type="ECO:0000305" key="2"/>
<organism>
    <name type="scientific">Legionella pneumophila subsp. pneumophila (strain Philadelphia 1 / ATCC 33152 / DSM 7513)</name>
    <dbReference type="NCBI Taxonomy" id="272624"/>
    <lineage>
        <taxon>Bacteria</taxon>
        <taxon>Pseudomonadati</taxon>
        <taxon>Pseudomonadota</taxon>
        <taxon>Gammaproteobacteria</taxon>
        <taxon>Legionellales</taxon>
        <taxon>Legionellaceae</taxon>
        <taxon>Legionella</taxon>
    </lineage>
</organism>
<feature type="chain" id="PRO_0000137979" description="Glycerol-3-phosphate dehydrogenase [NAD(P)+]">
    <location>
        <begin position="1"/>
        <end position="329"/>
    </location>
</feature>
<feature type="active site" description="Proton acceptor" evidence="1">
    <location>
        <position position="189"/>
    </location>
</feature>
<feature type="binding site" evidence="1">
    <location>
        <position position="13"/>
    </location>
    <ligand>
        <name>NADPH</name>
        <dbReference type="ChEBI" id="CHEBI:57783"/>
    </ligand>
</feature>
<feature type="binding site" evidence="1">
    <location>
        <position position="14"/>
    </location>
    <ligand>
        <name>NADPH</name>
        <dbReference type="ChEBI" id="CHEBI:57783"/>
    </ligand>
</feature>
<feature type="binding site" evidence="1">
    <location>
        <position position="34"/>
    </location>
    <ligand>
        <name>NADPH</name>
        <dbReference type="ChEBI" id="CHEBI:57783"/>
    </ligand>
</feature>
<feature type="binding site" evidence="1">
    <location>
        <position position="105"/>
    </location>
    <ligand>
        <name>NADPH</name>
        <dbReference type="ChEBI" id="CHEBI:57783"/>
    </ligand>
</feature>
<feature type="binding site" evidence="1">
    <location>
        <position position="105"/>
    </location>
    <ligand>
        <name>sn-glycerol 3-phosphate</name>
        <dbReference type="ChEBI" id="CHEBI:57597"/>
    </ligand>
</feature>
<feature type="binding site" evidence="1">
    <location>
        <position position="134"/>
    </location>
    <ligand>
        <name>sn-glycerol 3-phosphate</name>
        <dbReference type="ChEBI" id="CHEBI:57597"/>
    </ligand>
</feature>
<feature type="binding site" evidence="1">
    <location>
        <position position="136"/>
    </location>
    <ligand>
        <name>sn-glycerol 3-phosphate</name>
        <dbReference type="ChEBI" id="CHEBI:57597"/>
    </ligand>
</feature>
<feature type="binding site" evidence="1">
    <location>
        <position position="138"/>
    </location>
    <ligand>
        <name>NADPH</name>
        <dbReference type="ChEBI" id="CHEBI:57783"/>
    </ligand>
</feature>
<feature type="binding site" evidence="1">
    <location>
        <position position="189"/>
    </location>
    <ligand>
        <name>sn-glycerol 3-phosphate</name>
        <dbReference type="ChEBI" id="CHEBI:57597"/>
    </ligand>
</feature>
<feature type="binding site" evidence="1">
    <location>
        <position position="242"/>
    </location>
    <ligand>
        <name>sn-glycerol 3-phosphate</name>
        <dbReference type="ChEBI" id="CHEBI:57597"/>
    </ligand>
</feature>
<feature type="binding site" evidence="1">
    <location>
        <position position="252"/>
    </location>
    <ligand>
        <name>sn-glycerol 3-phosphate</name>
        <dbReference type="ChEBI" id="CHEBI:57597"/>
    </ligand>
</feature>
<feature type="binding site" evidence="1">
    <location>
        <position position="253"/>
    </location>
    <ligand>
        <name>NADPH</name>
        <dbReference type="ChEBI" id="CHEBI:57783"/>
    </ligand>
</feature>
<feature type="binding site" evidence="1">
    <location>
        <position position="253"/>
    </location>
    <ligand>
        <name>sn-glycerol 3-phosphate</name>
        <dbReference type="ChEBI" id="CHEBI:57597"/>
    </ligand>
</feature>
<feature type="binding site" evidence="1">
    <location>
        <position position="254"/>
    </location>
    <ligand>
        <name>sn-glycerol 3-phosphate</name>
        <dbReference type="ChEBI" id="CHEBI:57597"/>
    </ligand>
</feature>
<feature type="binding site" evidence="1">
    <location>
        <position position="277"/>
    </location>
    <ligand>
        <name>NADPH</name>
        <dbReference type="ChEBI" id="CHEBI:57783"/>
    </ligand>
</feature>
<feature type="binding site" evidence="1">
    <location>
        <position position="279"/>
    </location>
    <ligand>
        <name>NADPH</name>
        <dbReference type="ChEBI" id="CHEBI:57783"/>
    </ligand>
</feature>
<comment type="function">
    <text evidence="1">Catalyzes the reduction of the glycolytic intermediate dihydroxyacetone phosphate (DHAP) to sn-glycerol 3-phosphate (G3P), the key precursor for phospholipid synthesis.</text>
</comment>
<comment type="catalytic activity">
    <reaction evidence="1">
        <text>sn-glycerol 3-phosphate + NAD(+) = dihydroxyacetone phosphate + NADH + H(+)</text>
        <dbReference type="Rhea" id="RHEA:11092"/>
        <dbReference type="ChEBI" id="CHEBI:15378"/>
        <dbReference type="ChEBI" id="CHEBI:57540"/>
        <dbReference type="ChEBI" id="CHEBI:57597"/>
        <dbReference type="ChEBI" id="CHEBI:57642"/>
        <dbReference type="ChEBI" id="CHEBI:57945"/>
        <dbReference type="EC" id="1.1.1.94"/>
    </reaction>
    <physiologicalReaction direction="right-to-left" evidence="1">
        <dbReference type="Rhea" id="RHEA:11094"/>
    </physiologicalReaction>
</comment>
<comment type="catalytic activity">
    <reaction evidence="1">
        <text>sn-glycerol 3-phosphate + NADP(+) = dihydroxyacetone phosphate + NADPH + H(+)</text>
        <dbReference type="Rhea" id="RHEA:11096"/>
        <dbReference type="ChEBI" id="CHEBI:15378"/>
        <dbReference type="ChEBI" id="CHEBI:57597"/>
        <dbReference type="ChEBI" id="CHEBI:57642"/>
        <dbReference type="ChEBI" id="CHEBI:57783"/>
        <dbReference type="ChEBI" id="CHEBI:58349"/>
        <dbReference type="EC" id="1.1.1.94"/>
    </reaction>
    <physiologicalReaction direction="right-to-left" evidence="1">
        <dbReference type="Rhea" id="RHEA:11098"/>
    </physiologicalReaction>
</comment>
<comment type="pathway">
    <text evidence="1">Membrane lipid metabolism; glycerophospholipid metabolism.</text>
</comment>
<comment type="subcellular location">
    <subcellularLocation>
        <location evidence="1">Cytoplasm</location>
    </subcellularLocation>
</comment>
<comment type="similarity">
    <text evidence="1">Belongs to the NAD-dependent glycerol-3-phosphate dehydrogenase family.</text>
</comment>
<comment type="sequence caution" evidence="2">
    <conflict type="erroneous initiation">
        <sequence resource="EMBL-CDS" id="AAU28371"/>
    </conflict>
</comment>
<sequence length="329" mass="35410">MNKKTIAMLGAGSWGTAVAIHLAKIGHKTLLWSHNPQHVALMAEQHSNPAYLPGIPFPENLIPSDNLIECVQSADYVIIAVPSHAFAEIINKIPKPTQGLAWLTKGVDPASHELLSQLVASRFGVDFPIAVISGPSFAKEVARFLPTALTLASNNTNYQKKMHQLFHHDNIRVYLSDDLIGVQLCGAVKNILAIACGISDGLGYGANAKAALITRGLAEMTRLGLSMGARQDTFLGLAGVGDLVLTCTDDQSRNRRFGLLLGREVPIPEAEHQIGQVVEGKHNAAQICAIANKNKVEMPICEQINALLHGIVHAQEAVNNLMSRPAKEE</sequence>
<accession>Q5ZT56</accession>